<reference key="1">
    <citation type="journal article" date="2012" name="Dev. Biol.">
        <title>The thrombospondin repeat containing protein MIG-21 controls a left-right asymmetric Wnt signaling response in migrating C. elegans neuroblasts.</title>
        <authorList>
            <person name="Middelkoop T.C."/>
            <person name="Williams L."/>
            <person name="Yang P.T."/>
            <person name="Luchtenberg J."/>
            <person name="Betist M.C."/>
            <person name="Ji N."/>
            <person name="van Oudenaarden A."/>
            <person name="Kenyon C."/>
            <person name="Korswagen H.C."/>
        </authorList>
    </citation>
    <scope>NUCLEOTIDE SEQUENCE [MRNA] (ISOFORM B)</scope>
    <scope>FUNCTION</scope>
</reference>
<reference key="2">
    <citation type="journal article" date="1998" name="Science">
        <title>Genome sequence of the nematode C. elegans: a platform for investigating biology.</title>
        <authorList>
            <consortium name="The C. elegans sequencing consortium"/>
        </authorList>
    </citation>
    <scope>NUCLEOTIDE SEQUENCE [LARGE SCALE GENOMIC DNA]</scope>
    <source>
        <strain>Bristol N2</strain>
    </source>
</reference>
<reference key="3">
    <citation type="journal article" date="2012" name="Genetics">
        <title>Transmembrane proteins UNC-40/DCC, PTP-3/LAR, and MIG-21 control anterior-posterior neuroblast migration with left-right functional asymmetry in Caenorhabditis elegans.</title>
        <authorList>
            <person name="Sundararajan L."/>
            <person name="Lundquist E.A."/>
        </authorList>
    </citation>
    <scope>FUNCTION</scope>
</reference>
<reference key="4">
    <citation type="journal article" date="2013" name="Mol. Cell">
        <title>C. elegans DPY-19 is a C-mannosyltransferase glycosylating thrombospondin repeats.</title>
        <authorList>
            <person name="Buettner F.F."/>
            <person name="Ashikov A."/>
            <person name="Tiemann B."/>
            <person name="Lehle L."/>
            <person name="Bakker H."/>
        </authorList>
    </citation>
    <scope>GLYCOSYLATION AT TRP-58 AND TRP-61</scope>
</reference>
<proteinExistence type="evidence at protein level"/>
<keyword id="KW-0025">Alternative splicing</keyword>
<keyword id="KW-1015">Disulfide bond</keyword>
<keyword id="KW-0325">Glycoprotein</keyword>
<keyword id="KW-0472">Membrane</keyword>
<keyword id="KW-0524">Neurogenesis</keyword>
<keyword id="KW-1185">Reference proteome</keyword>
<keyword id="KW-0677">Repeat</keyword>
<keyword id="KW-0812">Transmembrane</keyword>
<keyword id="KW-1133">Transmembrane helix</keyword>
<protein>
    <recommendedName>
        <fullName>Abnormal cell migration protein 21</fullName>
    </recommendedName>
</protein>
<accession>G1FC92</accession>
<accession>Q19092</accession>
<comment type="function">
    <text evidence="3 4">Required for determination of left/right asymmetry in nervous system. Acts together with unc-40 to control an initial left-right asymmetric polarization of the Q neuroblasts. Mig-21 and unc-40 may control the asymmetry in Wnt signaling response by restricting posterior polarization to one of the 2 Q neuroblasts. Involved in left-side QL posterior migration. In right-side QR, unc-40 and mig-21 pathways mutually inhibit each other in posterior migration, allowing anterior QR migration.</text>
</comment>
<comment type="subcellular location">
    <subcellularLocation>
        <location evidence="6">Membrane</location>
        <topology evidence="6">Single-pass membrane protein</topology>
    </subcellularLocation>
</comment>
<comment type="alternative products">
    <event type="alternative splicing"/>
    <isoform>
        <id>G1FC92-1</id>
        <name>b</name>
        <sequence type="displayed"/>
    </isoform>
    <isoform>
        <id>G1FC92-2</id>
        <name>a</name>
        <sequence type="described" ref="VSP_046543"/>
    </isoform>
</comment>
<comment type="PTM">
    <text evidence="5">Glycosylated via C-mannosylation by dpy-19 at Trp-58 and Trp-61.</text>
</comment>
<evidence type="ECO:0000255" key="1"/>
<evidence type="ECO:0000255" key="2">
    <source>
        <dbReference type="PROSITE-ProRule" id="PRU00210"/>
    </source>
</evidence>
<evidence type="ECO:0000269" key="3">
    <source>
    </source>
</evidence>
<evidence type="ECO:0000269" key="4">
    <source>
    </source>
</evidence>
<evidence type="ECO:0000269" key="5">
    <source>
    </source>
</evidence>
<evidence type="ECO:0000305" key="6"/>
<gene>
    <name type="primary">mig-21</name>
    <name type="ORF">F01F1.13</name>
</gene>
<name>MIG21_CAEEL</name>
<organism>
    <name type="scientific">Caenorhabditis elegans</name>
    <dbReference type="NCBI Taxonomy" id="6239"/>
    <lineage>
        <taxon>Eukaryota</taxon>
        <taxon>Metazoa</taxon>
        <taxon>Ecdysozoa</taxon>
        <taxon>Nematoda</taxon>
        <taxon>Chromadorea</taxon>
        <taxon>Rhabditida</taxon>
        <taxon>Rhabditina</taxon>
        <taxon>Rhabditomorpha</taxon>
        <taxon>Rhabditoidea</taxon>
        <taxon>Rhabditidae</taxon>
        <taxon>Peloderinae</taxon>
        <taxon>Caenorhabditis</taxon>
    </lineage>
</organism>
<dbReference type="EMBL" id="JN165085">
    <property type="protein sequence ID" value="AEK25615.1"/>
    <property type="molecule type" value="mRNA"/>
</dbReference>
<dbReference type="EMBL" id="BX284603">
    <property type="protein sequence ID" value="CCG28107.1"/>
    <property type="molecule type" value="Genomic_DNA"/>
</dbReference>
<dbReference type="EMBL" id="BX284603">
    <property type="protein sequence ID" value="CCD66001.2"/>
    <property type="molecule type" value="Genomic_DNA"/>
</dbReference>
<dbReference type="RefSeq" id="NP_001254932.1">
    <property type="nucleotide sequence ID" value="NM_001268003.1"/>
</dbReference>
<dbReference type="RefSeq" id="NP_001254933.2">
    <molecule id="G1FC92-2"/>
    <property type="nucleotide sequence ID" value="NM_001268004.4"/>
</dbReference>
<dbReference type="SMR" id="G1FC92"/>
<dbReference type="BioGRID" id="48865">
    <property type="interactions" value="1"/>
</dbReference>
<dbReference type="FunCoup" id="G1FC92">
    <property type="interactions" value="65"/>
</dbReference>
<dbReference type="STRING" id="6239.F01F1.13a.1"/>
<dbReference type="GlyCosmos" id="G1FC92">
    <property type="glycosylation" value="2 sites, No reported glycans"/>
</dbReference>
<dbReference type="iPTMnet" id="G1FC92"/>
<dbReference type="PaxDb" id="6239-F01F1.13a"/>
<dbReference type="EnsemblMetazoa" id="F01F1.13.1">
    <molecule id="G1FC92-2"/>
    <property type="protein sequence ID" value="F01F1.13.1"/>
    <property type="gene ID" value="WBGene00003252"/>
</dbReference>
<dbReference type="GeneID" id="184064"/>
<dbReference type="KEGG" id="cel:CELE_F01F1.13"/>
<dbReference type="UCSC" id="F01F1.13">
    <property type="organism name" value="c. elegans"/>
</dbReference>
<dbReference type="AGR" id="WB:WBGene00003252"/>
<dbReference type="CTD" id="184064"/>
<dbReference type="WormBase" id="F01F1.13a">
    <molecule id="G1FC92-2"/>
    <property type="protein sequence ID" value="CE48870"/>
    <property type="gene ID" value="WBGene00003252"/>
    <property type="gene designation" value="mig-21"/>
</dbReference>
<dbReference type="WormBase" id="F01F1.13b">
    <molecule id="G1FC92-1"/>
    <property type="protein sequence ID" value="CE47419"/>
    <property type="gene ID" value="WBGene00003252"/>
    <property type="gene designation" value="mig-21"/>
</dbReference>
<dbReference type="eggNOG" id="ENOG502TH1V">
    <property type="taxonomic scope" value="Eukaryota"/>
</dbReference>
<dbReference type="GeneTree" id="ENSGT00940000174238"/>
<dbReference type="InParanoid" id="G1FC92"/>
<dbReference type="OMA" id="KIWNCIR"/>
<dbReference type="OrthoDB" id="446173at2759"/>
<dbReference type="PhylomeDB" id="G1FC92"/>
<dbReference type="PRO" id="PR:G1FC92"/>
<dbReference type="Proteomes" id="UP000001940">
    <property type="component" value="Chromosome III"/>
</dbReference>
<dbReference type="Bgee" id="WBGene00003252">
    <property type="expression patterns" value="Expressed in blast cell (C elegans) and 6 other cell types or tissues"/>
</dbReference>
<dbReference type="GO" id="GO:0005886">
    <property type="term" value="C:plasma membrane"/>
    <property type="evidence" value="ECO:0000250"/>
    <property type="project" value="WormBase"/>
</dbReference>
<dbReference type="GO" id="GO:0038023">
    <property type="term" value="F:signaling receptor activity"/>
    <property type="evidence" value="ECO:0000250"/>
    <property type="project" value="WormBase"/>
</dbReference>
<dbReference type="GO" id="GO:0035545">
    <property type="term" value="P:determination of left/right asymmetry in nervous system"/>
    <property type="evidence" value="ECO:0000315"/>
    <property type="project" value="WormBase"/>
</dbReference>
<dbReference type="GO" id="GO:0097402">
    <property type="term" value="P:neuroblast migration"/>
    <property type="evidence" value="ECO:0000315"/>
    <property type="project" value="WormBase"/>
</dbReference>
<dbReference type="GO" id="GO:0001764">
    <property type="term" value="P:neuron migration"/>
    <property type="evidence" value="ECO:0000315"/>
    <property type="project" value="WormBase"/>
</dbReference>
<dbReference type="GO" id="GO:0060828">
    <property type="term" value="P:regulation of canonical Wnt signaling pathway"/>
    <property type="evidence" value="ECO:0000315"/>
    <property type="project" value="WormBase"/>
</dbReference>
<dbReference type="GO" id="GO:0030334">
    <property type="term" value="P:regulation of cell migration"/>
    <property type="evidence" value="ECO:0000315"/>
    <property type="project" value="WormBase"/>
</dbReference>
<dbReference type="FunFam" id="2.20.100.10:FF:000001">
    <property type="entry name" value="semaphorin-5A isoform X1"/>
    <property type="match status" value="1"/>
</dbReference>
<dbReference type="Gene3D" id="2.20.100.10">
    <property type="entry name" value="Thrombospondin type-1 (TSP1) repeat"/>
    <property type="match status" value="2"/>
</dbReference>
<dbReference type="InterPro" id="IPR052065">
    <property type="entry name" value="Compl_asym_regulator"/>
</dbReference>
<dbReference type="InterPro" id="IPR000884">
    <property type="entry name" value="TSP1_rpt"/>
</dbReference>
<dbReference type="InterPro" id="IPR036383">
    <property type="entry name" value="TSP1_rpt_sf"/>
</dbReference>
<dbReference type="PANTHER" id="PTHR22906:SF42">
    <property type="entry name" value="ABNORMAL CELL MIGRATION PROTEIN 21"/>
    <property type="match status" value="1"/>
</dbReference>
<dbReference type="PANTHER" id="PTHR22906">
    <property type="entry name" value="PROPERDIN"/>
    <property type="match status" value="1"/>
</dbReference>
<dbReference type="Pfam" id="PF00090">
    <property type="entry name" value="TSP_1"/>
    <property type="match status" value="1"/>
</dbReference>
<dbReference type="PRINTS" id="PR01705">
    <property type="entry name" value="TSP1REPEAT"/>
</dbReference>
<dbReference type="SMART" id="SM00209">
    <property type="entry name" value="TSP1"/>
    <property type="match status" value="2"/>
</dbReference>
<dbReference type="SUPFAM" id="SSF82895">
    <property type="entry name" value="TSP-1 type 1 repeat"/>
    <property type="match status" value="2"/>
</dbReference>
<dbReference type="PROSITE" id="PS50092">
    <property type="entry name" value="TSP1"/>
    <property type="match status" value="2"/>
</dbReference>
<feature type="chain" id="PRO_0000422599" description="Abnormal cell migration protein 21">
    <location>
        <begin position="1"/>
        <end position="306"/>
    </location>
</feature>
<feature type="transmembrane region" description="Helical" evidence="1">
    <location>
        <begin position="240"/>
        <end position="260"/>
    </location>
</feature>
<feature type="domain" description="TSP type-1 1" evidence="2">
    <location>
        <begin position="55"/>
        <end position="102"/>
    </location>
</feature>
<feature type="domain" description="TSP type-1 2" evidence="2">
    <location>
        <begin position="109"/>
        <end position="155"/>
    </location>
</feature>
<feature type="glycosylation site" description="C-linked (Man) tryptophan" evidence="5">
    <location>
        <position position="58"/>
    </location>
</feature>
<feature type="glycosylation site" description="C-linked (Man) tryptophan" evidence="5">
    <location>
        <position position="61"/>
    </location>
</feature>
<feature type="disulfide bond" evidence="2">
    <location>
        <begin position="121"/>
        <end position="149"/>
    </location>
</feature>
<feature type="disulfide bond" evidence="2">
    <location>
        <begin position="123"/>
        <end position="154"/>
    </location>
</feature>
<feature type="disulfide bond" evidence="2">
    <location>
        <begin position="134"/>
        <end position="139"/>
    </location>
</feature>
<feature type="splice variant" id="VSP_046543" description="In isoform a." evidence="6">
    <original>MERDSNTAKSEIFYSNPAIWRHLKDGKGEGMSKSEKRNKHGCRNFTYS</original>
    <variation>MIVMVLFNIFVFVNFSYSLANLNDSSILYSQVVSNKCASNNGIFCECSKQGGEIK</variation>
    <location>
        <begin position="1"/>
        <end position="48"/>
    </location>
</feature>
<sequence>MERDSNTAKSEIFYSNPAIWRHLKDGKGEGMSKSEKRNKHGCRNFTYSIWNCIRPGGWSTWSKWSKCREGIRKRRRTCNNPLPIGTTCSGQKVEKQSCAISSNVPEYLFGSWTSWNPWSRCDCDRSLRIRTRHCKGNSCEGCDKDYEDCRPDECPISKKWSEWTDWVNYGIEQVRFSAWCSSSNVANTEVGIRKETQDSMKHANWSEWHMHPGVAYRYRLLHNSSISIEHHLLSRFTSSCLPLHFAIPIFCFCILTGFLLQNIIYCVVNRFKRRFIRLNYSYDSNPRDYPSHLIRSPGSPKDESFW</sequence>